<protein>
    <recommendedName>
        <fullName>Melanoma-associated antigen 4</fullName>
    </recommendedName>
    <alternativeName>
        <fullName>Cancer/testis antigen 1.4</fullName>
        <shortName>CT1.4</shortName>
    </alternativeName>
    <alternativeName>
        <fullName>MAGE-4 antigen</fullName>
    </alternativeName>
    <alternativeName>
        <fullName>MAGE-41 antigen</fullName>
    </alternativeName>
    <alternativeName>
        <fullName>MAGE-X2 antigen</fullName>
    </alternativeName>
</protein>
<name>MAGA4_HUMAN</name>
<evidence type="ECO:0000255" key="1">
    <source>
        <dbReference type="PROSITE-ProRule" id="PRU00127"/>
    </source>
</evidence>
<evidence type="ECO:0000256" key="2">
    <source>
        <dbReference type="SAM" id="MobiDB-lite"/>
    </source>
</evidence>
<evidence type="ECO:0000269" key="3">
    <source>
    </source>
</evidence>
<evidence type="ECO:0000269" key="4">
    <source>
    </source>
</evidence>
<evidence type="ECO:0000269" key="5">
    <source>
    </source>
</evidence>
<evidence type="ECO:0000269" key="6">
    <source>
    </source>
</evidence>
<evidence type="ECO:0000269" key="7">
    <source>
    </source>
</evidence>
<evidence type="ECO:0000269" key="8">
    <source>
    </source>
</evidence>
<evidence type="ECO:0000269" key="9">
    <source>
    </source>
</evidence>
<evidence type="ECO:0000269" key="10">
    <source>
    </source>
</evidence>
<evidence type="ECO:0000305" key="11"/>
<evidence type="ECO:0007829" key="12">
    <source>
        <dbReference type="PDB" id="2WA0"/>
    </source>
</evidence>
<evidence type="ECO:0007829" key="13">
    <source>
        <dbReference type="PDB" id="7UOA"/>
    </source>
</evidence>
<keyword id="KW-0002">3D-structure</keyword>
<keyword id="KW-1267">Proteomics identification</keyword>
<keyword id="KW-1185">Reference proteome</keyword>
<keyword id="KW-0825">Tumor antigen</keyword>
<accession>P43358</accession>
<accession>Q14798</accession>
<dbReference type="EMBL" id="U10687">
    <property type="protein sequence ID" value="AAA68871.1"/>
    <property type="molecule type" value="Genomic_DNA"/>
</dbReference>
<dbReference type="EMBL" id="U10688">
    <property type="protein sequence ID" value="AAA68872.1"/>
    <property type="molecule type" value="Genomic_DNA"/>
</dbReference>
<dbReference type="EMBL" id="U10340">
    <property type="protein sequence ID" value="AAA19007.1"/>
    <property type="molecule type" value="mRNA"/>
</dbReference>
<dbReference type="EMBL" id="D32075">
    <property type="protein sequence ID" value="BAA06841.1"/>
    <property type="molecule type" value="mRNA"/>
</dbReference>
<dbReference type="EMBL" id="D32077">
    <property type="protein sequence ID" value="BAA06843.1"/>
    <property type="molecule type" value="mRNA"/>
</dbReference>
<dbReference type="EMBL" id="AF274855">
    <property type="status" value="NOT_ANNOTATED_CDS"/>
    <property type="molecule type" value="Genomic_DNA"/>
</dbReference>
<dbReference type="EMBL" id="BC017723">
    <property type="protein sequence ID" value="AAH17723.1"/>
    <property type="molecule type" value="mRNA"/>
</dbReference>
<dbReference type="CCDS" id="CCDS14702.1"/>
<dbReference type="PIR" id="I38661">
    <property type="entry name" value="I38661"/>
</dbReference>
<dbReference type="RefSeq" id="NP_001011548.1">
    <property type="nucleotide sequence ID" value="NM_001011548.1"/>
</dbReference>
<dbReference type="RefSeq" id="NP_001011549.1">
    <property type="nucleotide sequence ID" value="NM_001011549.1"/>
</dbReference>
<dbReference type="RefSeq" id="NP_001011550.1">
    <property type="nucleotide sequence ID" value="NM_001011550.1"/>
</dbReference>
<dbReference type="RefSeq" id="NP_001373125.1">
    <property type="nucleotide sequence ID" value="NM_001386196.1"/>
</dbReference>
<dbReference type="RefSeq" id="NP_001373126.1">
    <property type="nucleotide sequence ID" value="NM_001386197.1"/>
</dbReference>
<dbReference type="RefSeq" id="NP_001373127.1">
    <property type="nucleotide sequence ID" value="NM_001386198.1"/>
</dbReference>
<dbReference type="RefSeq" id="NP_001373128.1">
    <property type="nucleotide sequence ID" value="NM_001386199.1"/>
</dbReference>
<dbReference type="RefSeq" id="NP_001373129.1">
    <property type="nucleotide sequence ID" value="NM_001386200.1"/>
</dbReference>
<dbReference type="RefSeq" id="NP_001373131.1">
    <property type="nucleotide sequence ID" value="NM_001386202.1"/>
</dbReference>
<dbReference type="RefSeq" id="NP_001373132.1">
    <property type="nucleotide sequence ID" value="NM_001386203.1"/>
</dbReference>
<dbReference type="RefSeq" id="NP_002353.3">
    <property type="nucleotide sequence ID" value="NM_002362.4"/>
</dbReference>
<dbReference type="RefSeq" id="XP_005274735.1">
    <property type="nucleotide sequence ID" value="XM_005274678.3"/>
</dbReference>
<dbReference type="RefSeq" id="XP_005274736.1">
    <property type="nucleotide sequence ID" value="XM_005274679.3"/>
</dbReference>
<dbReference type="RefSeq" id="XP_054183033.1">
    <property type="nucleotide sequence ID" value="XM_054327058.1"/>
</dbReference>
<dbReference type="PDB" id="1I4F">
    <property type="method" value="X-ray"/>
    <property type="resolution" value="1.40 A"/>
    <property type="chains" value="C=230-239"/>
</dbReference>
<dbReference type="PDB" id="2WA0">
    <property type="method" value="X-ray"/>
    <property type="resolution" value="2.30 A"/>
    <property type="chains" value="A=101-317"/>
</dbReference>
<dbReference type="PDB" id="6TRN">
    <property type="method" value="X-ray"/>
    <property type="resolution" value="1.35 A"/>
    <property type="chains" value="C=230-239"/>
</dbReference>
<dbReference type="PDB" id="6TRO">
    <property type="method" value="X-ray"/>
    <property type="resolution" value="3.00 A"/>
    <property type="chains" value="C=230-239"/>
</dbReference>
<dbReference type="PDB" id="7UOA">
    <property type="method" value="X-ray"/>
    <property type="resolution" value="3.50 A"/>
    <property type="chains" value="A=101-317"/>
</dbReference>
<dbReference type="PDB" id="8ES8">
    <property type="method" value="EM"/>
    <property type="resolution" value="2.65 A"/>
    <property type="chains" value="P=230-239"/>
</dbReference>
<dbReference type="PDB" id="8ES9">
    <property type="method" value="EM"/>
    <property type="resolution" value="3.25 A"/>
    <property type="chains" value="P=230-239"/>
</dbReference>
<dbReference type="PDB" id="8FJA">
    <property type="method" value="EM"/>
    <property type="resolution" value="3.00 A"/>
    <property type="chains" value="C=230-239"/>
</dbReference>
<dbReference type="PDB" id="9BD3">
    <property type="method" value="X-ray"/>
    <property type="resolution" value="2.58 A"/>
    <property type="chains" value="A/C=101-317"/>
</dbReference>
<dbReference type="PDBsum" id="1I4F"/>
<dbReference type="PDBsum" id="2WA0"/>
<dbReference type="PDBsum" id="6TRN"/>
<dbReference type="PDBsum" id="6TRO"/>
<dbReference type="PDBsum" id="7UOA"/>
<dbReference type="PDBsum" id="8ES8"/>
<dbReference type="PDBsum" id="8ES9"/>
<dbReference type="PDBsum" id="8FJA"/>
<dbReference type="PDBsum" id="9BD3"/>
<dbReference type="EMDB" id="EMD-28571"/>
<dbReference type="EMDB" id="EMD-28572"/>
<dbReference type="EMDB" id="EMD-29220"/>
<dbReference type="SMR" id="P43358"/>
<dbReference type="BioGRID" id="110277">
    <property type="interactions" value="58"/>
</dbReference>
<dbReference type="FunCoup" id="P43358">
    <property type="interactions" value="1"/>
</dbReference>
<dbReference type="IntAct" id="P43358">
    <property type="interactions" value="45"/>
</dbReference>
<dbReference type="MINT" id="P43358"/>
<dbReference type="STRING" id="9606.ENSP00000353379"/>
<dbReference type="BindingDB" id="P43358"/>
<dbReference type="ChEMBL" id="CHEMBL4296022"/>
<dbReference type="GlyGen" id="P43358">
    <property type="glycosylation" value="1 site, 1 O-linked glycan (1 site)"/>
</dbReference>
<dbReference type="iPTMnet" id="P43358"/>
<dbReference type="PhosphoSitePlus" id="P43358"/>
<dbReference type="BioMuta" id="MAGEA4"/>
<dbReference type="DMDM" id="322510046"/>
<dbReference type="jPOST" id="P43358"/>
<dbReference type="MassIVE" id="P43358"/>
<dbReference type="PaxDb" id="9606-ENSP00000353379"/>
<dbReference type="PeptideAtlas" id="P43358"/>
<dbReference type="ProteomicsDB" id="55620"/>
<dbReference type="Pumba" id="P43358"/>
<dbReference type="Antibodypedia" id="17051">
    <property type="antibodies" value="392 antibodies from 33 providers"/>
</dbReference>
<dbReference type="CPTC" id="P43358">
    <property type="antibodies" value="3 antibodies"/>
</dbReference>
<dbReference type="DNASU" id="4103"/>
<dbReference type="Ensembl" id="ENST00000276344.6">
    <property type="protein sequence ID" value="ENSP00000276344.2"/>
    <property type="gene ID" value="ENSG00000147381.12"/>
</dbReference>
<dbReference type="Ensembl" id="ENST00000360243.6">
    <property type="protein sequence ID" value="ENSP00000353379.2"/>
    <property type="gene ID" value="ENSG00000147381.12"/>
</dbReference>
<dbReference type="Ensembl" id="ENST00000370335.5">
    <property type="protein sequence ID" value="ENSP00000359360.1"/>
    <property type="gene ID" value="ENSG00000147381.12"/>
</dbReference>
<dbReference type="Ensembl" id="ENST00000370340.7">
    <property type="protein sequence ID" value="ENSP00000359365.3"/>
    <property type="gene ID" value="ENSG00000147381.12"/>
</dbReference>
<dbReference type="Ensembl" id="ENST00000393920.6">
    <property type="protein sequence ID" value="ENSP00000377497.1"/>
    <property type="gene ID" value="ENSG00000147381.12"/>
</dbReference>
<dbReference type="Ensembl" id="ENST00000393921.6">
    <property type="protein sequence ID" value="ENSP00000377498.1"/>
    <property type="gene ID" value="ENSG00000147381.12"/>
</dbReference>
<dbReference type="Ensembl" id="ENST00000430273.6">
    <property type="protein sequence ID" value="ENSP00000394149.2"/>
    <property type="gene ID" value="ENSG00000147381.12"/>
</dbReference>
<dbReference type="Ensembl" id="ENST00000457310.6">
    <property type="protein sequence ID" value="ENSP00000402186.2"/>
    <property type="gene ID" value="ENSG00000147381.12"/>
</dbReference>
<dbReference type="Ensembl" id="ENST00000682265.1">
    <property type="protein sequence ID" value="ENSP00000506838.1"/>
    <property type="gene ID" value="ENSG00000147381.12"/>
</dbReference>
<dbReference type="Ensembl" id="ENST00000684668.1">
    <property type="protein sequence ID" value="ENSP00000507023.1"/>
    <property type="gene ID" value="ENSG00000147381.12"/>
</dbReference>
<dbReference type="GeneID" id="4103"/>
<dbReference type="KEGG" id="hsa:4103"/>
<dbReference type="MANE-Select" id="ENST00000276344.6">
    <property type="protein sequence ID" value="ENSP00000276344.2"/>
    <property type="RefSeq nucleotide sequence ID" value="NM_001011548.1"/>
    <property type="RefSeq protein sequence ID" value="NP_001011548.1"/>
</dbReference>
<dbReference type="UCSC" id="uc004ffa.3">
    <property type="organism name" value="human"/>
</dbReference>
<dbReference type="AGR" id="HGNC:6802"/>
<dbReference type="CTD" id="4103"/>
<dbReference type="DisGeNET" id="4103"/>
<dbReference type="GeneCards" id="MAGEA4"/>
<dbReference type="HGNC" id="HGNC:6802">
    <property type="gene designation" value="MAGEA4"/>
</dbReference>
<dbReference type="HPA" id="ENSG00000147381">
    <property type="expression patterns" value="Tissue enriched (testis)"/>
</dbReference>
<dbReference type="MIM" id="300175">
    <property type="type" value="gene"/>
</dbReference>
<dbReference type="neXtProt" id="NX_P43358"/>
<dbReference type="OpenTargets" id="ENSG00000147381"/>
<dbReference type="PharmGKB" id="PA30548"/>
<dbReference type="VEuPathDB" id="HostDB:ENSG00000147381"/>
<dbReference type="eggNOG" id="KOG4562">
    <property type="taxonomic scope" value="Eukaryota"/>
</dbReference>
<dbReference type="GeneTree" id="ENSGT00940000166837"/>
<dbReference type="HOGENOM" id="CLU_039582_1_2_1"/>
<dbReference type="InParanoid" id="P43358"/>
<dbReference type="OMA" id="VNFTCWR"/>
<dbReference type="OrthoDB" id="9665809at2759"/>
<dbReference type="PAN-GO" id="P43358">
    <property type="GO annotations" value="3 GO annotations based on evolutionary models"/>
</dbReference>
<dbReference type="PhylomeDB" id="P43358"/>
<dbReference type="TreeFam" id="TF328505"/>
<dbReference type="PathwayCommons" id="P43358"/>
<dbReference type="SignaLink" id="P43358"/>
<dbReference type="BioGRID-ORCS" id="4103">
    <property type="hits" value="10 hits in 761 CRISPR screens"/>
</dbReference>
<dbReference type="CD-CODE" id="DEE660B4">
    <property type="entry name" value="Stress granule"/>
</dbReference>
<dbReference type="ChiTaRS" id="MAGEA4">
    <property type="organism name" value="human"/>
</dbReference>
<dbReference type="EvolutionaryTrace" id="P43358"/>
<dbReference type="GeneWiki" id="MAGEA4"/>
<dbReference type="GenomeRNAi" id="4103"/>
<dbReference type="Pharos" id="P43358">
    <property type="development level" value="Tbio"/>
</dbReference>
<dbReference type="PRO" id="PR:P43358"/>
<dbReference type="Proteomes" id="UP000005640">
    <property type="component" value="Chromosome X"/>
</dbReference>
<dbReference type="RNAct" id="P43358">
    <property type="molecule type" value="protein"/>
</dbReference>
<dbReference type="Bgee" id="ENSG00000147381">
    <property type="expression patterns" value="Expressed in male germ line stem cell (sensu Vertebrata) in testis and 54 other cell types or tissues"/>
</dbReference>
<dbReference type="ExpressionAtlas" id="P43358">
    <property type="expression patterns" value="baseline and differential"/>
</dbReference>
<dbReference type="GO" id="GO:0005634">
    <property type="term" value="C:nucleus"/>
    <property type="evidence" value="ECO:0000318"/>
    <property type="project" value="GO_Central"/>
</dbReference>
<dbReference type="GO" id="GO:0042826">
    <property type="term" value="F:histone deacetylase binding"/>
    <property type="evidence" value="ECO:0000318"/>
    <property type="project" value="GO_Central"/>
</dbReference>
<dbReference type="GO" id="GO:0043066">
    <property type="term" value="P:negative regulation of apoptotic process"/>
    <property type="evidence" value="ECO:0000315"/>
    <property type="project" value="UniProtKB"/>
</dbReference>
<dbReference type="GO" id="GO:0000122">
    <property type="term" value="P:negative regulation of transcription by RNA polymerase II"/>
    <property type="evidence" value="ECO:0000318"/>
    <property type="project" value="GO_Central"/>
</dbReference>
<dbReference type="GO" id="GO:0045787">
    <property type="term" value="P:positive regulation of cell cycle"/>
    <property type="evidence" value="ECO:0000315"/>
    <property type="project" value="UniProtKB"/>
</dbReference>
<dbReference type="FunFam" id="1.10.10.1200:FF:000002">
    <property type="entry name" value="MAGE family member A11"/>
    <property type="match status" value="1"/>
</dbReference>
<dbReference type="FunFam" id="1.10.10.1210:FF:000001">
    <property type="entry name" value="melanoma-associated antigen D1"/>
    <property type="match status" value="1"/>
</dbReference>
<dbReference type="Gene3D" id="1.10.10.1200">
    <property type="entry name" value="MAGE homology domain, winged helix WH1 motif"/>
    <property type="match status" value="1"/>
</dbReference>
<dbReference type="Gene3D" id="1.10.10.1210">
    <property type="entry name" value="MAGE homology domain, winged helix WH2 motif"/>
    <property type="match status" value="1"/>
</dbReference>
<dbReference type="InterPro" id="IPR037445">
    <property type="entry name" value="MAGE"/>
</dbReference>
<dbReference type="InterPro" id="IPR021072">
    <property type="entry name" value="MAGE_N"/>
</dbReference>
<dbReference type="InterPro" id="IPR041898">
    <property type="entry name" value="MAGE_WH1"/>
</dbReference>
<dbReference type="InterPro" id="IPR041899">
    <property type="entry name" value="MAGE_WH2"/>
</dbReference>
<dbReference type="InterPro" id="IPR002190">
    <property type="entry name" value="MHD_dom"/>
</dbReference>
<dbReference type="PANTHER" id="PTHR11736:SF48">
    <property type="entry name" value="MELANOMA-ASSOCIATED ANTIGEN 4"/>
    <property type="match status" value="1"/>
</dbReference>
<dbReference type="PANTHER" id="PTHR11736">
    <property type="entry name" value="MELANOMA-ASSOCIATED ANTIGEN MAGE ANTIGEN"/>
    <property type="match status" value="1"/>
</dbReference>
<dbReference type="Pfam" id="PF01454">
    <property type="entry name" value="MAGE"/>
    <property type="match status" value="1"/>
</dbReference>
<dbReference type="Pfam" id="PF12440">
    <property type="entry name" value="MAGE_N"/>
    <property type="match status" value="1"/>
</dbReference>
<dbReference type="SMART" id="SM01373">
    <property type="entry name" value="MAGE"/>
    <property type="match status" value="1"/>
</dbReference>
<dbReference type="SMART" id="SM01392">
    <property type="entry name" value="MAGE_N"/>
    <property type="match status" value="1"/>
</dbReference>
<dbReference type="PROSITE" id="PS50838">
    <property type="entry name" value="MAGE"/>
    <property type="match status" value="1"/>
</dbReference>
<organism>
    <name type="scientific">Homo sapiens</name>
    <name type="common">Human</name>
    <dbReference type="NCBI Taxonomy" id="9606"/>
    <lineage>
        <taxon>Eukaryota</taxon>
        <taxon>Metazoa</taxon>
        <taxon>Chordata</taxon>
        <taxon>Craniata</taxon>
        <taxon>Vertebrata</taxon>
        <taxon>Euteleostomi</taxon>
        <taxon>Mammalia</taxon>
        <taxon>Eutheria</taxon>
        <taxon>Euarchontoglires</taxon>
        <taxon>Primates</taxon>
        <taxon>Haplorrhini</taxon>
        <taxon>Catarrhini</taxon>
        <taxon>Hominidae</taxon>
        <taxon>Homo</taxon>
    </lineage>
</organism>
<sequence length="317" mass="34899">MSSEQKSQHCKPEEGVEAQEEALGLVGAQAPTTEEQEAAVSSSSPLVPGTLEEVPAAESAGPPQSPQGASALPTTISFTCWRQPNEGSSSQEEEGPSTSPDAESLFREALSNKVDELAHFLLRKYRAKELVTKAEMLERVIKNYKRCFPVIFGKASESLKMIFGIDVKEVDPASNTYTLVTCLGLSYDGLLGNNQIFPKTGLLIIVLGTIAMEGDSASEEEIWEELGVMGVYDGREHTVYGEPRKLLTQDWVQENYLEYRQVPGSNPARYEFLWGPRALAETSYVKVLEHVVRVNARVRIAYPSLREAALLEEEEGV</sequence>
<reference key="1">
    <citation type="journal article" date="1994" name="Immunogenetics">
        <title>Structure, chromosomal localization, and expression of 12 genes of the MAGE family.</title>
        <authorList>
            <person name="De Plaen E."/>
            <person name="Arden K."/>
            <person name="Traversari C."/>
            <person name="Gaforio J.J."/>
            <person name="Szikora J.-P."/>
            <person name="De Smet C."/>
            <person name="Brasseur F."/>
            <person name="van der Bruggen P."/>
            <person name="Lethe B.G."/>
            <person name="Lurquin C."/>
            <person name="Brasseur R."/>
            <person name="Chomez P."/>
            <person name="de Backer O."/>
            <person name="Cavenee W."/>
            <person name="Boon T."/>
        </authorList>
    </citation>
    <scope>NUCLEOTIDE SEQUENCE [GENOMIC DNA]</scope>
    <scope>VARIANT THR-173</scope>
    <source>
        <tissue>Blood</tissue>
    </source>
</reference>
<reference key="2">
    <citation type="journal article" date="1994" name="Biochem. Biophys. Res. Commun.">
        <title>Cloning and analysis of MAGE-1-related genes.</title>
        <authorList>
            <person name="Ding M."/>
            <person name="Beck R.J."/>
            <person name="Keller C.J."/>
            <person name="Fenton R.G."/>
        </authorList>
    </citation>
    <scope>NUCLEOTIDE SEQUENCE [MRNA]</scope>
    <scope>VARIANT THR-173</scope>
    <source>
        <tissue>Skin</tissue>
    </source>
</reference>
<reference key="3">
    <citation type="journal article" date="1995" name="Gene">
        <title>Sequence analysis of the MAGE gene family encoding human tumor-rejection antigens.</title>
        <authorList>
            <person name="Imai Y."/>
            <person name="Shichijo S."/>
            <person name="Yamada A."/>
            <person name="Katayama T."/>
            <person name="Yano H."/>
            <person name="Itoh K."/>
        </authorList>
    </citation>
    <scope>NUCLEOTIDE SEQUENCE [MRNA]</scope>
    <scope>VARIANT THR-173</scope>
</reference>
<reference key="4">
    <citation type="journal article" date="2005" name="Nature">
        <title>The DNA sequence of the human X chromosome.</title>
        <authorList>
            <person name="Ross M.T."/>
            <person name="Grafham D.V."/>
            <person name="Coffey A.J."/>
            <person name="Scherer S."/>
            <person name="McLay K."/>
            <person name="Muzny D."/>
            <person name="Platzer M."/>
            <person name="Howell G.R."/>
            <person name="Burrows C."/>
            <person name="Bird C.P."/>
            <person name="Frankish A."/>
            <person name="Lovell F.L."/>
            <person name="Howe K.L."/>
            <person name="Ashurst J.L."/>
            <person name="Fulton R.S."/>
            <person name="Sudbrak R."/>
            <person name="Wen G."/>
            <person name="Jones M.C."/>
            <person name="Hurles M.E."/>
            <person name="Andrews T.D."/>
            <person name="Scott C.E."/>
            <person name="Searle S."/>
            <person name="Ramser J."/>
            <person name="Whittaker A."/>
            <person name="Deadman R."/>
            <person name="Carter N.P."/>
            <person name="Hunt S.E."/>
            <person name="Chen R."/>
            <person name="Cree A."/>
            <person name="Gunaratne P."/>
            <person name="Havlak P."/>
            <person name="Hodgson A."/>
            <person name="Metzker M.L."/>
            <person name="Richards S."/>
            <person name="Scott G."/>
            <person name="Steffen D."/>
            <person name="Sodergren E."/>
            <person name="Wheeler D.A."/>
            <person name="Worley K.C."/>
            <person name="Ainscough R."/>
            <person name="Ambrose K.D."/>
            <person name="Ansari-Lari M.A."/>
            <person name="Aradhya S."/>
            <person name="Ashwell R.I."/>
            <person name="Babbage A.K."/>
            <person name="Bagguley C.L."/>
            <person name="Ballabio A."/>
            <person name="Banerjee R."/>
            <person name="Barker G.E."/>
            <person name="Barlow K.F."/>
            <person name="Barrett I.P."/>
            <person name="Bates K.N."/>
            <person name="Beare D.M."/>
            <person name="Beasley H."/>
            <person name="Beasley O."/>
            <person name="Beck A."/>
            <person name="Bethel G."/>
            <person name="Blechschmidt K."/>
            <person name="Brady N."/>
            <person name="Bray-Allen S."/>
            <person name="Bridgeman A.M."/>
            <person name="Brown A.J."/>
            <person name="Brown M.J."/>
            <person name="Bonnin D."/>
            <person name="Bruford E.A."/>
            <person name="Buhay C."/>
            <person name="Burch P."/>
            <person name="Burford D."/>
            <person name="Burgess J."/>
            <person name="Burrill W."/>
            <person name="Burton J."/>
            <person name="Bye J.M."/>
            <person name="Carder C."/>
            <person name="Carrel L."/>
            <person name="Chako J."/>
            <person name="Chapman J.C."/>
            <person name="Chavez D."/>
            <person name="Chen E."/>
            <person name="Chen G."/>
            <person name="Chen Y."/>
            <person name="Chen Z."/>
            <person name="Chinault C."/>
            <person name="Ciccodicola A."/>
            <person name="Clark S.Y."/>
            <person name="Clarke G."/>
            <person name="Clee C.M."/>
            <person name="Clegg S."/>
            <person name="Clerc-Blankenburg K."/>
            <person name="Clifford K."/>
            <person name="Cobley V."/>
            <person name="Cole C.G."/>
            <person name="Conquer J.S."/>
            <person name="Corby N."/>
            <person name="Connor R.E."/>
            <person name="David R."/>
            <person name="Davies J."/>
            <person name="Davis C."/>
            <person name="Davis J."/>
            <person name="Delgado O."/>
            <person name="Deshazo D."/>
            <person name="Dhami P."/>
            <person name="Ding Y."/>
            <person name="Dinh H."/>
            <person name="Dodsworth S."/>
            <person name="Draper H."/>
            <person name="Dugan-Rocha S."/>
            <person name="Dunham A."/>
            <person name="Dunn M."/>
            <person name="Durbin K.J."/>
            <person name="Dutta I."/>
            <person name="Eades T."/>
            <person name="Ellwood M."/>
            <person name="Emery-Cohen A."/>
            <person name="Errington H."/>
            <person name="Evans K.L."/>
            <person name="Faulkner L."/>
            <person name="Francis F."/>
            <person name="Frankland J."/>
            <person name="Fraser A.E."/>
            <person name="Galgoczy P."/>
            <person name="Gilbert J."/>
            <person name="Gill R."/>
            <person name="Gloeckner G."/>
            <person name="Gregory S.G."/>
            <person name="Gribble S."/>
            <person name="Griffiths C."/>
            <person name="Grocock R."/>
            <person name="Gu Y."/>
            <person name="Gwilliam R."/>
            <person name="Hamilton C."/>
            <person name="Hart E.A."/>
            <person name="Hawes A."/>
            <person name="Heath P.D."/>
            <person name="Heitmann K."/>
            <person name="Hennig S."/>
            <person name="Hernandez J."/>
            <person name="Hinzmann B."/>
            <person name="Ho S."/>
            <person name="Hoffs M."/>
            <person name="Howden P.J."/>
            <person name="Huckle E.J."/>
            <person name="Hume J."/>
            <person name="Hunt P.J."/>
            <person name="Hunt A.R."/>
            <person name="Isherwood J."/>
            <person name="Jacob L."/>
            <person name="Johnson D."/>
            <person name="Jones S."/>
            <person name="de Jong P.J."/>
            <person name="Joseph S.S."/>
            <person name="Keenan S."/>
            <person name="Kelly S."/>
            <person name="Kershaw J.K."/>
            <person name="Khan Z."/>
            <person name="Kioschis P."/>
            <person name="Klages S."/>
            <person name="Knights A.J."/>
            <person name="Kosiura A."/>
            <person name="Kovar-Smith C."/>
            <person name="Laird G.K."/>
            <person name="Langford C."/>
            <person name="Lawlor S."/>
            <person name="Leversha M."/>
            <person name="Lewis L."/>
            <person name="Liu W."/>
            <person name="Lloyd C."/>
            <person name="Lloyd D.M."/>
            <person name="Loulseged H."/>
            <person name="Loveland J.E."/>
            <person name="Lovell J.D."/>
            <person name="Lozado R."/>
            <person name="Lu J."/>
            <person name="Lyne R."/>
            <person name="Ma J."/>
            <person name="Maheshwari M."/>
            <person name="Matthews L.H."/>
            <person name="McDowall J."/>
            <person name="McLaren S."/>
            <person name="McMurray A."/>
            <person name="Meidl P."/>
            <person name="Meitinger T."/>
            <person name="Milne S."/>
            <person name="Miner G."/>
            <person name="Mistry S.L."/>
            <person name="Morgan M."/>
            <person name="Morris S."/>
            <person name="Mueller I."/>
            <person name="Mullikin J.C."/>
            <person name="Nguyen N."/>
            <person name="Nordsiek G."/>
            <person name="Nyakatura G."/>
            <person name="O'dell C.N."/>
            <person name="Okwuonu G."/>
            <person name="Palmer S."/>
            <person name="Pandian R."/>
            <person name="Parker D."/>
            <person name="Parrish J."/>
            <person name="Pasternak S."/>
            <person name="Patel D."/>
            <person name="Pearce A.V."/>
            <person name="Pearson D.M."/>
            <person name="Pelan S.E."/>
            <person name="Perez L."/>
            <person name="Porter K.M."/>
            <person name="Ramsey Y."/>
            <person name="Reichwald K."/>
            <person name="Rhodes S."/>
            <person name="Ridler K.A."/>
            <person name="Schlessinger D."/>
            <person name="Schueler M.G."/>
            <person name="Sehra H.K."/>
            <person name="Shaw-Smith C."/>
            <person name="Shen H."/>
            <person name="Sheridan E.M."/>
            <person name="Shownkeen R."/>
            <person name="Skuce C.D."/>
            <person name="Smith M.L."/>
            <person name="Sotheran E.C."/>
            <person name="Steingruber H.E."/>
            <person name="Steward C.A."/>
            <person name="Storey R."/>
            <person name="Swann R.M."/>
            <person name="Swarbreck D."/>
            <person name="Tabor P.E."/>
            <person name="Taudien S."/>
            <person name="Taylor T."/>
            <person name="Teague B."/>
            <person name="Thomas K."/>
            <person name="Thorpe A."/>
            <person name="Timms K."/>
            <person name="Tracey A."/>
            <person name="Trevanion S."/>
            <person name="Tromans A.C."/>
            <person name="d'Urso M."/>
            <person name="Verduzco D."/>
            <person name="Villasana D."/>
            <person name="Waldron L."/>
            <person name="Wall M."/>
            <person name="Wang Q."/>
            <person name="Warren J."/>
            <person name="Warry G.L."/>
            <person name="Wei X."/>
            <person name="West A."/>
            <person name="Whitehead S.L."/>
            <person name="Whiteley M.N."/>
            <person name="Wilkinson J.E."/>
            <person name="Willey D.L."/>
            <person name="Williams G."/>
            <person name="Williams L."/>
            <person name="Williamson A."/>
            <person name="Williamson H."/>
            <person name="Wilming L."/>
            <person name="Woodmansey R.L."/>
            <person name="Wray P.W."/>
            <person name="Yen J."/>
            <person name="Zhang J."/>
            <person name="Zhou J."/>
            <person name="Zoghbi H."/>
            <person name="Zorilla S."/>
            <person name="Buck D."/>
            <person name="Reinhardt R."/>
            <person name="Poustka A."/>
            <person name="Rosenthal A."/>
            <person name="Lehrach H."/>
            <person name="Meindl A."/>
            <person name="Minx P.J."/>
            <person name="Hillier L.W."/>
            <person name="Willard H.F."/>
            <person name="Wilson R.K."/>
            <person name="Waterston R.H."/>
            <person name="Rice C.M."/>
            <person name="Vaudin M."/>
            <person name="Coulson A."/>
            <person name="Nelson D.L."/>
            <person name="Weinstock G."/>
            <person name="Sulston J.E."/>
            <person name="Durbin R.M."/>
            <person name="Hubbard T."/>
            <person name="Gibbs R.A."/>
            <person name="Beck S."/>
            <person name="Rogers J."/>
            <person name="Bentley D.R."/>
        </authorList>
    </citation>
    <scope>NUCLEOTIDE SEQUENCE [LARGE SCALE GENOMIC DNA]</scope>
</reference>
<reference key="5">
    <citation type="journal article" date="2004" name="Genome Res.">
        <title>The status, quality, and expansion of the NIH full-length cDNA project: the Mammalian Gene Collection (MGC).</title>
        <authorList>
            <consortium name="The MGC Project Team"/>
        </authorList>
    </citation>
    <scope>NUCLEOTIDE SEQUENCE [LARGE SCALE MRNA]</scope>
    <scope>VARIANT THR-173</scope>
    <source>
        <tissue>Duodenum</tissue>
    </source>
</reference>
<reference key="6">
    <citation type="journal article" date="2011" name="BMC Syst. Biol.">
        <title>Initial characterization of the human central proteome.</title>
        <authorList>
            <person name="Burkard T.R."/>
            <person name="Planyavsky M."/>
            <person name="Kaupe I."/>
            <person name="Breitwieser F.P."/>
            <person name="Buerckstuemmer T."/>
            <person name="Bennett K.L."/>
            <person name="Superti-Furga G."/>
            <person name="Colinge J."/>
        </authorList>
    </citation>
    <scope>IDENTIFICATION BY MASS SPECTROMETRY [LARGE SCALE ANALYSIS]</scope>
</reference>
<reference key="7">
    <citation type="journal article" date="2012" name="Oncol. Rep.">
        <title>MAGEA4 induces growth in normal oral keratinocytes by inhibiting growth arrest and apoptosis.</title>
        <authorList>
            <person name="Bhan S."/>
            <person name="Chuang A."/>
            <person name="Negi S.S."/>
            <person name="Glazer C.A."/>
            <person name="Califano J.A."/>
        </authorList>
    </citation>
    <scope>FUNCTION</scope>
</reference>
<reference key="8">
    <citation type="journal article" date="2001" name="J. Mol. Biol.">
        <title>High-resolution structure of HLA-A*0201 in complex with a tumour-specific antigenic peptide encoded by the MAGE-A4 gene.</title>
        <authorList>
            <person name="Hillig R.C."/>
            <person name="Coulie P.G."/>
            <person name="Stroobant V."/>
            <person name="Saenger W."/>
            <person name="Ziegler A."/>
            <person name="Hulsmeyer M."/>
        </authorList>
    </citation>
    <scope>X-RAY CRYSTALLOGRAPHY (1.4 ANGSTROMS) OF 230-239</scope>
</reference>
<reference key="9">
    <citation type="journal article" date="2006" name="Science">
        <title>The consensus coding sequences of human breast and colorectal cancers.</title>
        <authorList>
            <person name="Sjoeblom T."/>
            <person name="Jones S."/>
            <person name="Wood L.D."/>
            <person name="Parsons D.W."/>
            <person name="Lin J."/>
            <person name="Barber T.D."/>
            <person name="Mandelker D."/>
            <person name="Leary R.J."/>
            <person name="Ptak J."/>
            <person name="Silliman N."/>
            <person name="Szabo S."/>
            <person name="Buckhaults P."/>
            <person name="Farrell C."/>
            <person name="Meeh P."/>
            <person name="Markowitz S.D."/>
            <person name="Willis J."/>
            <person name="Dawson D."/>
            <person name="Willson J.K.V."/>
            <person name="Gazdar A.F."/>
            <person name="Hartigan J."/>
            <person name="Wu L."/>
            <person name="Liu C."/>
            <person name="Parmigiani G."/>
            <person name="Park B.H."/>
            <person name="Bachman K.E."/>
            <person name="Papadopoulos N."/>
            <person name="Vogelstein B."/>
            <person name="Kinzler K.W."/>
            <person name="Velculescu V.E."/>
        </authorList>
    </citation>
    <scope>VARIANT [LARGE SCALE ANALYSIS] ASP-153</scope>
</reference>
<reference key="10">
    <citation type="journal article" date="2012" name="Transl. Psychiatry">
        <title>Analysis of the chromosome X exome in patients with autism spectrum disorders identified novel candidate genes, including TMLHE.</title>
        <authorList>
            <person name="Nava C."/>
            <person name="Lamari F."/>
            <person name="Heron D."/>
            <person name="Mignot C."/>
            <person name="Rastetter A."/>
            <person name="Keren B."/>
            <person name="Cohen D."/>
            <person name="Faudet A."/>
            <person name="Bouteiller D."/>
            <person name="Gilleron M."/>
            <person name="Jacquette A."/>
            <person name="Whalen S."/>
            <person name="Afenjar A."/>
            <person name="Perisse D."/>
            <person name="Laurent C."/>
            <person name="Dupuits C."/>
            <person name="Gautier C."/>
            <person name="Gerard M."/>
            <person name="Huguet G."/>
            <person name="Caillet S."/>
            <person name="Leheup B."/>
            <person name="Leboyer M."/>
            <person name="Gillberg C."/>
            <person name="Delorme R."/>
            <person name="Bourgeron T."/>
            <person name="Brice A."/>
            <person name="Depienne C."/>
        </authorList>
    </citation>
    <scope>VARIANT GLN-137</scope>
</reference>
<reference key="11">
    <citation type="journal article" date="2017" name="Hum. Mutat.">
        <title>Mutations in genes encoding polycomb repressive complex 2 subunits cause Weaver syndrome.</title>
        <authorList>
            <person name="Imagawa E."/>
            <person name="Higashimoto K."/>
            <person name="Sakai Y."/>
            <person name="Numakura C."/>
            <person name="Okamoto N."/>
            <person name="Matsunaga S."/>
            <person name="Ryo A."/>
            <person name="Sato Y."/>
            <person name="Sanefuji M."/>
            <person name="Ihara K."/>
            <person name="Takada Y."/>
            <person name="Nishimura G."/>
            <person name="Saitsu H."/>
            <person name="Mizuguchi T."/>
            <person name="Miyatake S."/>
            <person name="Nakashima M."/>
            <person name="Miyake N."/>
            <person name="Soejima H."/>
            <person name="Matsumoto N."/>
        </authorList>
    </citation>
    <scope>VARIANT GLU-230</scope>
</reference>
<proteinExistence type="evidence at protein level"/>
<feature type="chain" id="PRO_0000156704" description="Melanoma-associated antigen 4">
    <location>
        <begin position="1"/>
        <end position="317"/>
    </location>
</feature>
<feature type="domain" description="MAGE" evidence="1">
    <location>
        <begin position="110"/>
        <end position="309"/>
    </location>
</feature>
<feature type="region of interest" description="Disordered" evidence="2">
    <location>
        <begin position="1"/>
        <end position="102"/>
    </location>
</feature>
<feature type="compositionally biased region" description="Basic and acidic residues" evidence="2">
    <location>
        <begin position="1"/>
        <end position="14"/>
    </location>
</feature>
<feature type="compositionally biased region" description="Polar residues" evidence="2">
    <location>
        <begin position="66"/>
        <end position="82"/>
    </location>
</feature>
<feature type="sequence variant" id="VAR_076262" description="In dbSNP:rs1224431639." evidence="6">
    <original>L</original>
    <variation>Q</variation>
    <location>
        <position position="137"/>
    </location>
</feature>
<feature type="sequence variant" id="VAR_036582" description="In a breast cancer sample; somatic mutation." evidence="4">
    <original>G</original>
    <variation>D</variation>
    <location>
        <position position="153"/>
    </location>
</feature>
<feature type="sequence variant" id="VAR_004284" description="In dbSNP:rs1047251." evidence="3 8 9 10">
    <original>A</original>
    <variation>T</variation>
    <location>
        <position position="173"/>
    </location>
</feature>
<feature type="sequence variant" id="VAR_078319" description="In dbSNP:rs773875619." evidence="7">
    <original>G</original>
    <variation>E</variation>
    <location>
        <position position="230"/>
    </location>
</feature>
<feature type="sequence conflict" description="In Ref. 3; BAA06841." evidence="11" ref="3">
    <original>S</original>
    <variation>L</variation>
    <location>
        <position position="3"/>
    </location>
</feature>
<feature type="sequence conflict" description="In Ref. 3; BAA06841." evidence="11" ref="3">
    <original>P</original>
    <variation>L</variation>
    <location>
        <position position="48"/>
    </location>
</feature>
<feature type="sequence conflict" description="In Ref. 3; BAA06841." evidence="11" ref="3">
    <original>E</original>
    <variation>K</variation>
    <location>
        <position position="53"/>
    </location>
</feature>
<feature type="sequence conflict" description="In Ref. 3; BAA06841." evidence="11" ref="3">
    <original>G</original>
    <variation>D</variation>
    <location>
        <position position="61"/>
    </location>
</feature>
<feature type="sequence conflict" description="In Ref. 3; BAA06841." evidence="11" ref="3">
    <original>GP</original>
    <variation>EA</variation>
    <location>
        <begin position="95"/>
        <end position="96"/>
    </location>
</feature>
<feature type="sequence conflict" description="In Ref. 2; AAA19007." evidence="11" ref="2">
    <original>E</original>
    <variation>Q</variation>
    <location>
        <position position="307"/>
    </location>
</feature>
<feature type="helix" evidence="12">
    <location>
        <begin position="102"/>
        <end position="126"/>
    </location>
</feature>
<feature type="strand" evidence="13">
    <location>
        <begin position="130"/>
        <end position="132"/>
    </location>
</feature>
<feature type="helix" evidence="12">
    <location>
        <begin position="133"/>
        <end position="139"/>
    </location>
</feature>
<feature type="strand" evidence="13">
    <location>
        <begin position="141"/>
        <end position="144"/>
    </location>
</feature>
<feature type="helix" evidence="12">
    <location>
        <begin position="145"/>
        <end position="147"/>
    </location>
</feature>
<feature type="helix" evidence="12">
    <location>
        <begin position="148"/>
        <end position="163"/>
    </location>
</feature>
<feature type="strand" evidence="12">
    <location>
        <begin position="165"/>
        <end position="169"/>
    </location>
</feature>
<feature type="strand" evidence="12">
    <location>
        <begin position="176"/>
        <end position="181"/>
    </location>
</feature>
<feature type="helix" evidence="12">
    <location>
        <begin position="182"/>
        <end position="184"/>
    </location>
</feature>
<feature type="helix" evidence="12">
    <location>
        <begin position="200"/>
        <end position="213"/>
    </location>
</feature>
<feature type="helix" evidence="12">
    <location>
        <begin position="219"/>
        <end position="228"/>
    </location>
</feature>
<feature type="turn" evidence="12">
    <location>
        <begin position="238"/>
        <end position="240"/>
    </location>
</feature>
<feature type="helix" evidence="12">
    <location>
        <begin position="243"/>
        <end position="248"/>
    </location>
</feature>
<feature type="helix" evidence="12">
    <location>
        <begin position="250"/>
        <end position="253"/>
    </location>
</feature>
<feature type="strand" evidence="12">
    <location>
        <begin position="256"/>
        <end position="260"/>
    </location>
</feature>
<feature type="strand" evidence="12">
    <location>
        <begin position="271"/>
        <end position="274"/>
    </location>
</feature>
<feature type="helix" evidence="12">
    <location>
        <begin position="276"/>
        <end position="281"/>
    </location>
</feature>
<feature type="helix" evidence="12">
    <location>
        <begin position="284"/>
        <end position="295"/>
    </location>
</feature>
<feature type="helix" evidence="12">
    <location>
        <begin position="305"/>
        <end position="309"/>
    </location>
</feature>
<gene>
    <name type="primary">MAGEA4</name>
    <name type="synonym">MAGE4</name>
</gene>
<comment type="function">
    <text evidence="5">Regulates cell proliferation through the inhibition of cell cycle arrest at the G1 phase (PubMed:22842486). Also negatively regulates p53-mediated apoptosis (PubMed:22842486).</text>
</comment>
<comment type="interaction">
    <interactant intactId="EBI-743122">
        <id>P43358</id>
    </interactant>
    <interactant intactId="EBI-17286414">
        <id>A2BDD9</id>
        <label>AMOT</label>
    </interactant>
    <organismsDiffer>false</organismsDiffer>
    <experiments>5</experiments>
</comment>
<comment type="interaction">
    <interactant intactId="EBI-743122">
        <id>P43358</id>
    </interactant>
    <interactant intactId="EBI-2511319">
        <id>Q4VCS5</id>
        <label>AMOT</label>
    </interactant>
    <organismsDiffer>false</organismsDiffer>
    <experiments>3</experiments>
</comment>
<comment type="interaction">
    <interactant intactId="EBI-743122">
        <id>P43358</id>
    </interactant>
    <interactant intactId="EBI-3904738">
        <id>P10176</id>
        <label>COX8A</label>
    </interactant>
    <organismsDiffer>false</organismsDiffer>
    <experiments>3</experiments>
</comment>
<comment type="interaction">
    <interactant intactId="EBI-743122">
        <id>P43358</id>
    </interactant>
    <interactant intactId="EBI-12037393">
        <id>Q8N4P3-2</id>
        <label>HDDC3</label>
    </interactant>
    <organismsDiffer>false</organismsDiffer>
    <experiments>3</experiments>
</comment>
<comment type="interaction">
    <interactant intactId="EBI-743122">
        <id>P43358</id>
    </interactant>
    <interactant intactId="EBI-747813">
        <id>Q5SW96</id>
        <label>LDLRAP1</label>
    </interactant>
    <organismsDiffer>false</organismsDiffer>
    <experiments>3</experiments>
</comment>
<comment type="interaction">
    <interactant intactId="EBI-743122">
        <id>P43358</id>
    </interactant>
    <interactant intactId="EBI-79165">
        <id>Q9NRD5</id>
        <label>PICK1</label>
    </interactant>
    <organismsDiffer>false</organismsDiffer>
    <experiments>3</experiments>
</comment>
<comment type="interaction">
    <interactant intactId="EBI-743122">
        <id>P43358</id>
    </interactant>
    <interactant intactId="EBI-752420">
        <id>Q9NUX5</id>
        <label>POT1</label>
    </interactant>
    <organismsDiffer>false</organismsDiffer>
    <experiments>2</experiments>
</comment>
<comment type="interaction">
    <interactant intactId="EBI-743122">
        <id>P43358</id>
    </interactant>
    <interactant intactId="EBI-752185">
        <id>O75832</id>
        <label>PSMD10</label>
    </interactant>
    <organismsDiffer>false</organismsDiffer>
    <experiments>5</experiments>
</comment>
<comment type="interaction">
    <interactant intactId="EBI-743122">
        <id>P43358</id>
    </interactant>
    <interactant intactId="EBI-12807240">
        <id>Q08623</id>
        <label>PUDP</label>
    </interactant>
    <organismsDiffer>false</organismsDiffer>
    <experiments>3</experiments>
</comment>
<comment type="interaction">
    <interactant intactId="EBI-743122">
        <id>P43358</id>
    </interactant>
    <interactant intactId="EBI-2339393">
        <id>Q9NS91</id>
        <label>RAD18</label>
    </interactant>
    <organismsDiffer>false</organismsDiffer>
    <experiments>6</experiments>
</comment>
<comment type="interaction">
    <interactant intactId="EBI-743122">
        <id>P43358</id>
    </interactant>
    <interactant intactId="EBI-750487">
        <id>Q8WW24</id>
        <label>TEKT4</label>
    </interactant>
    <organismsDiffer>false</organismsDiffer>
    <experiments>7</experiments>
</comment>
<comment type="interaction">
    <interactant intactId="EBI-743122">
        <id>P43358</id>
    </interactant>
    <interactant intactId="EBI-749955">
        <id>Q86WT6</id>
        <label>TRIM69</label>
    </interactant>
    <organismsDiffer>false</organismsDiffer>
    <experiments>3</experiments>
</comment>
<comment type="interaction">
    <interactant intactId="EBI-743122">
        <id>P43358</id>
    </interactant>
    <interactant intactId="EBI-11525489">
        <id>Q86WT6-2</id>
        <label>TRIM69</label>
    </interactant>
    <organismsDiffer>false</organismsDiffer>
    <experiments>3</experiments>
</comment>
<comment type="interaction">
    <interactant intactId="EBI-743122">
        <id>P43358</id>
    </interactant>
    <interactant intactId="EBI-723389">
        <id>Q6FI91</id>
        <label>TSPYL</label>
    </interactant>
    <organismsDiffer>false</organismsDiffer>
    <experiments>3</experiments>
</comment>
<comment type="interaction">
    <interactant intactId="EBI-743122">
        <id>P43358</id>
    </interactant>
    <interactant intactId="EBI-308511">
        <id>Q9UJ04</id>
        <label>TSPYL4</label>
    </interactant>
    <organismsDiffer>false</organismsDiffer>
    <experiments>8</experiments>
</comment>
<comment type="interaction">
    <interactant intactId="EBI-743122">
        <id>P43358</id>
    </interactant>
    <interactant intactId="EBI-2932492">
        <id>Q99757</id>
        <label>TXN2</label>
    </interactant>
    <organismsDiffer>false</organismsDiffer>
    <experiments>3</experiments>
</comment>
<comment type="interaction">
    <interactant intactId="EBI-743122">
        <id>P43358</id>
    </interactant>
    <interactant intactId="EBI-1993899">
        <id>Q9BZV1</id>
        <label>UBXN6</label>
    </interactant>
    <organismsDiffer>false</organismsDiffer>
    <experiments>4</experiments>
</comment>
<comment type="interaction">
    <interactant intactId="EBI-743122">
        <id>P43358</id>
    </interactant>
    <interactant intactId="EBI-743128">
        <id>P14927</id>
        <label>UQCRB</label>
    </interactant>
    <organismsDiffer>false</organismsDiffer>
    <experiments>7</experiments>
</comment>
<comment type="interaction">
    <interactant intactId="EBI-743122">
        <id>P43358</id>
    </interactant>
    <interactant intactId="EBI-11153331">
        <id>Q2YD98</id>
        <label>UVSSA</label>
    </interactant>
    <organismsDiffer>false</organismsDiffer>
    <experiments>3</experiments>
</comment>
<comment type="interaction">
    <interactant intactId="EBI-743122">
        <id>P43358</id>
    </interactant>
    <interactant intactId="EBI-372156">
        <id>Q13105</id>
        <label>ZBTB17</label>
    </interactant>
    <organismsDiffer>false</organismsDiffer>
    <experiments>5</experiments>
</comment>
<comment type="interaction">
    <interactant intactId="EBI-743122">
        <id>P43358</id>
    </interactant>
    <interactant intactId="EBI-3921014">
        <id>Q9H609</id>
        <label>ZNF576</label>
    </interactant>
    <organismsDiffer>false</organismsDiffer>
    <experiments>5</experiments>
</comment>
<comment type="tissue specificity">
    <text>Expressed in many tumors of several types, such as melanoma, head and neck squamous cell carcinoma, lung carcinoma and breast carcinoma, but not in normal tissues except for testes and placenta.</text>
</comment>